<evidence type="ECO:0000255" key="1"/>
<evidence type="ECO:0000255" key="2">
    <source>
        <dbReference type="PROSITE-ProRule" id="PRU00498"/>
    </source>
</evidence>
<evidence type="ECO:0000269" key="3">
    <source>
    </source>
</evidence>
<evidence type="ECO:0000303" key="4">
    <source>
    </source>
</evidence>
<evidence type="ECO:0000305" key="5"/>
<evidence type="ECO:0000312" key="6">
    <source>
        <dbReference type="Araport" id="AT2G15040"/>
    </source>
</evidence>
<evidence type="ECO:0000312" key="7">
    <source>
        <dbReference type="Araport" id="AT2G15042"/>
    </source>
</evidence>
<evidence type="ECO:0000312" key="8">
    <source>
        <dbReference type="EMBL" id="AAD03361.1"/>
    </source>
</evidence>
<sequence length="826" mass="91225">MRCQVWNVIELNLSSSCLHGLLNSKSNIFSLQNLRFLDLSNNHFSGQILSSLGNFSSLTTLDLSENHFSGQIPSSLGNLLHLTSLDLTDNNFVGDIPTSLGNLSHLTLLLLGANNLVGEIPFSLGNLSHLTDLTLCENDLAGEIPSSFENLSHLTNLDLSQNNLVGEIPSFFGSFNQLVSLAVEENEFTGNFLLILLNLTNLSDLSLSRNQFTGTLPPNMSSLSNLVLFYADANAFTGTIPSSLLNIPSLSCFDLSDNQLNGNIEFGNISSSLSDLLLGNNNFRGSIHKSISKLVNLYTLDLSHFNTQGSINFSIFSDLKLLVDLHLSHLNTTTTIDLNTFLSSFKSLDTLDLSGNHISAINKSSVSNPVTTARPGLGLTNPLLLSRFNLSGCGVTEFPEFLRTQQTMEILDISNNKINGQVPGWLWTLPTLDYVNLSNNTFTGFQRLMVPSSWQPSMNYFSGANNNFTGNLPAFICAFTLQALHLRKNHLSGVFPENISESLKSLDVGHNQLVGKLPRSLVRISSLEVLNVENNKINDTFPFWLSSLEELQVLVLRSNAFHGPMQQTRFPNLRIIDVSHNHFNGTLPSDFFVNWTVMFLLGENEDQFNGEYMGTSYYSDSIVVMNKGLEMEMVRILKIFTSVDFSRNKFEGEIPKSIGLLKELHVLNLSSNTFTGHIPSSMGKLRELESLDVAQNKLSGDIPQDLGDLSYLAYMNFSHNQLVGPLPGGTQFLTQNCSSFEENAGHFGPSLEKVCDIHGKTMQESEMPGSEEDEEEVISWIAATIGFIPGIAFGLMMGYILVCYKPEWFMNVFGKNKSRSTSSTTR</sequence>
<gene>
    <name evidence="4" type="primary">RLP18</name>
    <name evidence="6 7" type="ordered locus">At2g15040/At2g15042</name>
    <name evidence="8" type="ORF">T15J14.8</name>
</gene>
<proteinExistence type="evidence at transcript level"/>
<name>RLP18_ARATH</name>
<protein>
    <recommendedName>
        <fullName evidence="4">Receptor-like protein 18</fullName>
        <shortName evidence="4">AtRLP18</shortName>
    </recommendedName>
</protein>
<keyword id="KW-1003">Cell membrane</keyword>
<keyword id="KW-0325">Glycoprotein</keyword>
<keyword id="KW-0433">Leucine-rich repeat</keyword>
<keyword id="KW-0472">Membrane</keyword>
<keyword id="KW-0611">Plant defense</keyword>
<keyword id="KW-1185">Reference proteome</keyword>
<keyword id="KW-0677">Repeat</keyword>
<keyword id="KW-0812">Transmembrane</keyword>
<keyword id="KW-1133">Transmembrane helix</keyword>
<comment type="subcellular location">
    <subcellularLocation>
        <location evidence="5">Cell membrane</location>
        <topology evidence="5">Single-pass type I membrane protein</topology>
    </subcellularLocation>
</comment>
<comment type="disruption phenotype">
    <text evidence="3">Enhanced susceptibility to pathogen Pseudomonas syringae pv. phaseolicola.</text>
</comment>
<comment type="similarity">
    <text evidence="5">Belongs to the RLP family.</text>
</comment>
<comment type="caution">
    <text evidence="5">Lacks the signal peptide, which is a conserved feature of the gene family.</text>
</comment>
<comment type="sequence caution" evidence="5">
    <conflict type="erroneous gene model prediction">
        <sequence resource="EMBL-CDS" id="AAD03361"/>
    </conflict>
</comment>
<comment type="sequence caution" evidence="5">
    <conflict type="erroneous gene model prediction">
        <sequence resource="EMBL-CDS" id="AEC06363"/>
    </conflict>
    <text>Was originally thought to correspond to two different genes At2g15040 and At5g15042.</text>
</comment>
<feature type="chain" id="PRO_0000443480" description="Receptor-like protein 18">
    <location>
        <begin position="1"/>
        <end position="826"/>
    </location>
</feature>
<feature type="topological domain" description="Extracellular" evidence="5">
    <location>
        <begin position="1"/>
        <end position="780"/>
    </location>
</feature>
<feature type="transmembrane region" description="Helical" evidence="1">
    <location>
        <begin position="781"/>
        <end position="801"/>
    </location>
</feature>
<feature type="topological domain" description="Cytoplasmic" evidence="5">
    <location>
        <begin position="802"/>
        <end position="826"/>
    </location>
</feature>
<feature type="repeat" description="LRR 1" evidence="1">
    <location>
        <begin position="5"/>
        <end position="31"/>
    </location>
</feature>
<feature type="repeat" description="LRR 2" evidence="1">
    <location>
        <begin position="32"/>
        <end position="54"/>
    </location>
</feature>
<feature type="repeat" description="LRR 3" evidence="1">
    <location>
        <begin position="55"/>
        <end position="79"/>
    </location>
</feature>
<feature type="repeat" description="LRR 4" evidence="1">
    <location>
        <begin position="81"/>
        <end position="103"/>
    </location>
</feature>
<feature type="repeat" description="LRR 5" evidence="1">
    <location>
        <begin position="104"/>
        <end position="127"/>
    </location>
</feature>
<feature type="repeat" description="LRR 6" evidence="1">
    <location>
        <begin position="128"/>
        <end position="150"/>
    </location>
</feature>
<feature type="repeat" description="LRR 7" evidence="1">
    <location>
        <begin position="151"/>
        <end position="177"/>
    </location>
</feature>
<feature type="repeat" description="LRR 8; degenerate" evidence="5">
    <location>
        <begin position="178"/>
        <end position="198"/>
    </location>
</feature>
<feature type="repeat" description="LRR 9" evidence="1">
    <location>
        <begin position="199"/>
        <end position="223"/>
    </location>
</feature>
<feature type="repeat" description="LRR 10" evidence="1">
    <location>
        <begin position="225"/>
        <end position="247"/>
    </location>
</feature>
<feature type="repeat" description="LRR 11" evidence="1">
    <location>
        <begin position="248"/>
        <end position="271"/>
    </location>
</feature>
<feature type="repeat" description="LRR 12" evidence="1">
    <location>
        <begin position="273"/>
        <end position="294"/>
    </location>
</feature>
<feature type="repeat" description="LRR 13" evidence="1">
    <location>
        <begin position="296"/>
        <end position="318"/>
    </location>
</feature>
<feature type="repeat" description="LRR 14" evidence="1">
    <location>
        <begin position="319"/>
        <end position="343"/>
    </location>
</feature>
<feature type="repeat" description="LRR 15" evidence="1">
    <location>
        <begin position="345"/>
        <end position="368"/>
    </location>
</feature>
<feature type="repeat" description="LRR 16" evidence="1">
    <location>
        <begin position="382"/>
        <end position="405"/>
    </location>
</feature>
<feature type="repeat" description="LRR 17" evidence="1">
    <location>
        <begin position="406"/>
        <end position="429"/>
    </location>
</feature>
<feature type="repeat" description="LRR 18" evidence="1">
    <location>
        <begin position="430"/>
        <end position="452"/>
    </location>
</feature>
<feature type="repeat" description="LRR 19" evidence="1">
    <location>
        <begin position="455"/>
        <end position="478"/>
    </location>
</feature>
<feature type="repeat" description="LRR 20" evidence="1">
    <location>
        <begin position="479"/>
        <end position="500"/>
    </location>
</feature>
<feature type="repeat" description="LRR 21" evidence="1">
    <location>
        <begin position="501"/>
        <end position="524"/>
    </location>
</feature>
<feature type="repeat" description="LRR 22" evidence="1">
    <location>
        <begin position="525"/>
        <end position="550"/>
    </location>
</feature>
<feature type="repeat" description="LRR 23" evidence="1">
    <location>
        <begin position="552"/>
        <end position="570"/>
    </location>
</feature>
<feature type="repeat" description="LRR 24" evidence="1">
    <location>
        <begin position="571"/>
        <end position="594"/>
    </location>
</feature>
<feature type="repeat" description="LRR 25" evidence="1">
    <location>
        <begin position="637"/>
        <end position="661"/>
    </location>
</feature>
<feature type="repeat" description="LRR 26" evidence="1">
    <location>
        <begin position="662"/>
        <end position="685"/>
    </location>
</feature>
<feature type="repeat" description="LRR 27" evidence="1">
    <location>
        <begin position="686"/>
        <end position="709"/>
    </location>
</feature>
<feature type="repeat" description="LRR 28" evidence="1">
    <location>
        <begin position="711"/>
        <end position="734"/>
    </location>
</feature>
<feature type="glycosylation site" description="N-linked (GlcNAc...) asparagine" evidence="2">
    <location>
        <position position="12"/>
    </location>
</feature>
<feature type="glycosylation site" description="N-linked (GlcNAc...) asparagine" evidence="2">
    <location>
        <position position="54"/>
    </location>
</feature>
<feature type="glycosylation site" description="N-linked (GlcNAc...) asparagine" evidence="2">
    <location>
        <position position="102"/>
    </location>
</feature>
<feature type="glycosylation site" description="N-linked (GlcNAc...) asparagine" evidence="2">
    <location>
        <position position="126"/>
    </location>
</feature>
<feature type="glycosylation site" description="N-linked (GlcNAc...) asparagine" evidence="2">
    <location>
        <position position="150"/>
    </location>
</feature>
<feature type="glycosylation site" description="N-linked (GlcNAc...) asparagine" evidence="2">
    <location>
        <position position="198"/>
    </location>
</feature>
<feature type="glycosylation site" description="N-linked (GlcNAc...) asparagine" evidence="2">
    <location>
        <position position="201"/>
    </location>
</feature>
<feature type="glycosylation site" description="N-linked (GlcNAc...) asparagine" evidence="2">
    <location>
        <position position="219"/>
    </location>
</feature>
<feature type="glycosylation site" description="N-linked (GlcNAc...) asparagine" evidence="2">
    <location>
        <position position="268"/>
    </location>
</feature>
<feature type="glycosylation site" description="N-linked (GlcNAc...) asparagine" evidence="2">
    <location>
        <position position="312"/>
    </location>
</feature>
<feature type="glycosylation site" description="N-linked (GlcNAc...) asparagine" evidence="2">
    <location>
        <position position="331"/>
    </location>
</feature>
<feature type="glycosylation site" description="N-linked (GlcNAc...) asparagine" evidence="2">
    <location>
        <position position="362"/>
    </location>
</feature>
<feature type="glycosylation site" description="N-linked (GlcNAc...) asparagine" evidence="2">
    <location>
        <position position="389"/>
    </location>
</feature>
<feature type="glycosylation site" description="N-linked (GlcNAc...) asparagine" evidence="2">
    <location>
        <position position="436"/>
    </location>
</feature>
<feature type="glycosylation site" description="N-linked (GlcNAc...) asparagine" evidence="2">
    <location>
        <position position="439"/>
    </location>
</feature>
<feature type="glycosylation site" description="N-linked (GlcNAc...) asparagine" evidence="2">
    <location>
        <position position="467"/>
    </location>
</feature>
<feature type="glycosylation site" description="N-linked (GlcNAc...) asparagine" evidence="2">
    <location>
        <position position="498"/>
    </location>
</feature>
<feature type="glycosylation site" description="N-linked (GlcNAc...) asparagine" evidence="2">
    <location>
        <position position="538"/>
    </location>
</feature>
<feature type="glycosylation site" description="N-linked (GlcNAc...) asparagine" evidence="2">
    <location>
        <position position="584"/>
    </location>
</feature>
<feature type="glycosylation site" description="N-linked (GlcNAc...) asparagine" evidence="2">
    <location>
        <position position="594"/>
    </location>
</feature>
<feature type="glycosylation site" description="N-linked (GlcNAc...) asparagine" evidence="2">
    <location>
        <position position="668"/>
    </location>
</feature>
<feature type="glycosylation site" description="N-linked (GlcNAc...) asparagine" evidence="2">
    <location>
        <position position="716"/>
    </location>
</feature>
<feature type="glycosylation site" description="N-linked (GlcNAc...) asparagine" evidence="2">
    <location>
        <position position="736"/>
    </location>
</feature>
<feature type="sequence conflict" description="In Ref. 3; BX819827." evidence="5" ref="3">
    <original>F</original>
    <variation>L</variation>
    <location>
        <position position="175"/>
    </location>
</feature>
<feature type="sequence conflict" description="In Ref. 3; BX819827." evidence="5" ref="3">
    <original>F</original>
    <variation>S</variation>
    <location>
        <position position="229"/>
    </location>
</feature>
<feature type="sequence conflict" description="In Ref. 1; AAD03361." evidence="5" ref="1">
    <original>D</original>
    <variation>N</variation>
    <location>
        <position position="324"/>
    </location>
</feature>
<accession>Q9ZUK7</accession>
<accession>F4IHG3</accession>
<dbReference type="EMBL" id="AC005957">
    <property type="protein sequence ID" value="AAD03361.1"/>
    <property type="status" value="ALT_SEQ"/>
    <property type="molecule type" value="Genomic_DNA"/>
</dbReference>
<dbReference type="EMBL" id="CP002685">
    <property type="protein sequence ID" value="AEC06363.2"/>
    <property type="status" value="ALT_SEQ"/>
    <property type="molecule type" value="Genomic_DNA"/>
</dbReference>
<dbReference type="EMBL" id="BX819827">
    <property type="status" value="NOT_ANNOTATED_CDS"/>
    <property type="molecule type" value="mRNA"/>
</dbReference>
<dbReference type="EMBL" id="BX821852">
    <property type="status" value="NOT_ANNOTATED_CDS"/>
    <property type="molecule type" value="mRNA"/>
</dbReference>
<dbReference type="PIR" id="C84524">
    <property type="entry name" value="C84524"/>
</dbReference>
<dbReference type="RefSeq" id="NP_001318226.1">
    <property type="nucleotide sequence ID" value="NM_001335446.1"/>
</dbReference>
<dbReference type="SMR" id="Q9ZUK7"/>
<dbReference type="STRING" id="3702.Q9ZUK7"/>
<dbReference type="GlyCosmos" id="Q9ZUK7">
    <property type="glycosylation" value="23 sites, No reported glycans"/>
</dbReference>
<dbReference type="GlyGen" id="Q9ZUK7">
    <property type="glycosylation" value="23 sites"/>
</dbReference>
<dbReference type="PaxDb" id="3702-AT2G15042.1"/>
<dbReference type="PeptideAtlas" id="Q9ZUK7"/>
<dbReference type="KEGG" id="ath:AT2G15042"/>
<dbReference type="Araport" id="AT2G15040"/>
<dbReference type="Araport" id="AT2G15042"/>
<dbReference type="TAIR" id="AT2G15040"/>
<dbReference type="eggNOG" id="KOG0619">
    <property type="taxonomic scope" value="Eukaryota"/>
</dbReference>
<dbReference type="InParanoid" id="Q9ZUK7"/>
<dbReference type="PRO" id="PR:Q9ZUK7"/>
<dbReference type="Proteomes" id="UP000006548">
    <property type="component" value="Chromosome 2"/>
</dbReference>
<dbReference type="ExpressionAtlas" id="Q9ZUK7">
    <property type="expression patterns" value="baseline and differential"/>
</dbReference>
<dbReference type="GO" id="GO:0005886">
    <property type="term" value="C:plasma membrane"/>
    <property type="evidence" value="ECO:0007669"/>
    <property type="project" value="UniProtKB-SubCell"/>
</dbReference>
<dbReference type="GO" id="GO:0042742">
    <property type="term" value="P:defense response to bacterium"/>
    <property type="evidence" value="ECO:0000315"/>
    <property type="project" value="UniProtKB"/>
</dbReference>
<dbReference type="GO" id="GO:0002758">
    <property type="term" value="P:innate immune response-activating signaling pathway"/>
    <property type="evidence" value="ECO:0000315"/>
    <property type="project" value="UniProtKB"/>
</dbReference>
<dbReference type="FunFam" id="3.80.10.10:FF:000383">
    <property type="entry name" value="Leucine-rich repeat receptor protein kinase EMS1"/>
    <property type="match status" value="1"/>
</dbReference>
<dbReference type="FunFam" id="3.80.10.10:FF:000356">
    <property type="entry name" value="LRR receptor-like serine/threonine-protein kinase"/>
    <property type="match status" value="1"/>
</dbReference>
<dbReference type="FunFam" id="3.80.10.10:FF:000095">
    <property type="entry name" value="LRR receptor-like serine/threonine-protein kinase GSO1"/>
    <property type="match status" value="1"/>
</dbReference>
<dbReference type="Gene3D" id="3.80.10.10">
    <property type="entry name" value="Ribonuclease Inhibitor"/>
    <property type="match status" value="3"/>
</dbReference>
<dbReference type="InterPro" id="IPR001611">
    <property type="entry name" value="Leu-rich_rpt"/>
</dbReference>
<dbReference type="InterPro" id="IPR003591">
    <property type="entry name" value="Leu-rich_rpt_typical-subtyp"/>
</dbReference>
<dbReference type="InterPro" id="IPR032675">
    <property type="entry name" value="LRR_dom_sf"/>
</dbReference>
<dbReference type="InterPro" id="IPR055414">
    <property type="entry name" value="LRR_R13L4/SHOC2-like"/>
</dbReference>
<dbReference type="PANTHER" id="PTHR48065">
    <property type="entry name" value="OS10G0469600 PROTEIN"/>
    <property type="match status" value="1"/>
</dbReference>
<dbReference type="Pfam" id="PF00560">
    <property type="entry name" value="LRR_1"/>
    <property type="match status" value="5"/>
</dbReference>
<dbReference type="Pfam" id="PF23598">
    <property type="entry name" value="LRR_14"/>
    <property type="match status" value="1"/>
</dbReference>
<dbReference type="Pfam" id="PF13855">
    <property type="entry name" value="LRR_8"/>
    <property type="match status" value="2"/>
</dbReference>
<dbReference type="SMART" id="SM00369">
    <property type="entry name" value="LRR_TYP"/>
    <property type="match status" value="7"/>
</dbReference>
<dbReference type="SUPFAM" id="SSF52058">
    <property type="entry name" value="L domain-like"/>
    <property type="match status" value="2"/>
</dbReference>
<dbReference type="SUPFAM" id="SSF52047">
    <property type="entry name" value="RNI-like"/>
    <property type="match status" value="1"/>
</dbReference>
<dbReference type="PROSITE" id="PS51450">
    <property type="entry name" value="LRR"/>
    <property type="match status" value="18"/>
</dbReference>
<organism>
    <name type="scientific">Arabidopsis thaliana</name>
    <name type="common">Mouse-ear cress</name>
    <dbReference type="NCBI Taxonomy" id="3702"/>
    <lineage>
        <taxon>Eukaryota</taxon>
        <taxon>Viridiplantae</taxon>
        <taxon>Streptophyta</taxon>
        <taxon>Embryophyta</taxon>
        <taxon>Tracheophyta</taxon>
        <taxon>Spermatophyta</taxon>
        <taxon>Magnoliopsida</taxon>
        <taxon>eudicotyledons</taxon>
        <taxon>Gunneridae</taxon>
        <taxon>Pentapetalae</taxon>
        <taxon>rosids</taxon>
        <taxon>malvids</taxon>
        <taxon>Brassicales</taxon>
        <taxon>Brassicaceae</taxon>
        <taxon>Camelineae</taxon>
        <taxon>Arabidopsis</taxon>
    </lineage>
</organism>
<reference key="1">
    <citation type="journal article" date="1999" name="Nature">
        <title>Sequence and analysis of chromosome 2 of the plant Arabidopsis thaliana.</title>
        <authorList>
            <person name="Lin X."/>
            <person name="Kaul S."/>
            <person name="Rounsley S.D."/>
            <person name="Shea T.P."/>
            <person name="Benito M.-I."/>
            <person name="Town C.D."/>
            <person name="Fujii C.Y."/>
            <person name="Mason T.M."/>
            <person name="Bowman C.L."/>
            <person name="Barnstead M.E."/>
            <person name="Feldblyum T.V."/>
            <person name="Buell C.R."/>
            <person name="Ketchum K.A."/>
            <person name="Lee J.J."/>
            <person name="Ronning C.M."/>
            <person name="Koo H.L."/>
            <person name="Moffat K.S."/>
            <person name="Cronin L.A."/>
            <person name="Shen M."/>
            <person name="Pai G."/>
            <person name="Van Aken S."/>
            <person name="Umayam L."/>
            <person name="Tallon L.J."/>
            <person name="Gill J.E."/>
            <person name="Adams M.D."/>
            <person name="Carrera A.J."/>
            <person name="Creasy T.H."/>
            <person name="Goodman H.M."/>
            <person name="Somerville C.R."/>
            <person name="Copenhaver G.P."/>
            <person name="Preuss D."/>
            <person name="Nierman W.C."/>
            <person name="White O."/>
            <person name="Eisen J.A."/>
            <person name="Salzberg S.L."/>
            <person name="Fraser C.M."/>
            <person name="Venter J.C."/>
        </authorList>
    </citation>
    <scope>NUCLEOTIDE SEQUENCE [LARGE SCALE GENOMIC DNA]</scope>
    <source>
        <strain>cv. Columbia</strain>
    </source>
</reference>
<reference key="2">
    <citation type="journal article" date="2017" name="Plant J.">
        <title>Araport11: a complete reannotation of the Arabidopsis thaliana reference genome.</title>
        <authorList>
            <person name="Cheng C.Y."/>
            <person name="Krishnakumar V."/>
            <person name="Chan A.P."/>
            <person name="Thibaud-Nissen F."/>
            <person name="Schobel S."/>
            <person name="Town C.D."/>
        </authorList>
    </citation>
    <scope>GENOME REANNOTATION</scope>
    <source>
        <strain>cv. Columbia</strain>
    </source>
</reference>
<reference key="3">
    <citation type="journal article" date="2004" name="Genome Res.">
        <title>Whole genome sequence comparisons and 'full-length' cDNA sequences: a combined approach to evaluate and improve Arabidopsis genome annotation.</title>
        <authorList>
            <person name="Castelli V."/>
            <person name="Aury J.-M."/>
            <person name="Jaillon O."/>
            <person name="Wincker P."/>
            <person name="Clepet C."/>
            <person name="Menard M."/>
            <person name="Cruaud C."/>
            <person name="Quetier F."/>
            <person name="Scarpelli C."/>
            <person name="Schaechter V."/>
            <person name="Temple G."/>
            <person name="Caboche M."/>
            <person name="Weissenbach J."/>
            <person name="Salanoubat M."/>
        </authorList>
    </citation>
    <scope>NUCLEOTIDE SEQUENCE [LARGE SCALE MRNA] OF 1-343</scope>
    <scope>NUCLEOTIDE SEQUENCE [LARGE SCALE MRNA] OF 601-750</scope>
    <source>
        <strain>cv. Columbia</strain>
    </source>
</reference>
<reference key="4">
    <citation type="journal article" date="2005" name="Plant Physiol.">
        <title>Phylogenomic analysis of the receptor-like proteins of rice and Arabidopsis.</title>
        <authorList>
            <person name="Fritz-Laylin L.K."/>
            <person name="Krishnamurthy N."/>
            <person name="Toer M."/>
            <person name="Sjoelander K.V."/>
            <person name="Jones J.D."/>
        </authorList>
    </citation>
    <scope>GENE FAMILY</scope>
</reference>
<reference key="5">
    <citation type="journal article" date="2008" name="Plant Physiol.">
        <title>A genome-wide functional investigation into the roles of receptor-like proteins in Arabidopsis.</title>
        <authorList>
            <person name="Wang G."/>
            <person name="Ellendorff U."/>
            <person name="Kemp B."/>
            <person name="Mansfield J.W."/>
            <person name="Forsyth A."/>
            <person name="Mitchell K."/>
            <person name="Bastas K."/>
            <person name="Liu C.-M."/>
            <person name="Woods-Toer A."/>
            <person name="Zipfel C."/>
            <person name="de Wit P.J.G.M."/>
            <person name="Jones J.D.G."/>
            <person name="Toer M."/>
            <person name="Thomma B.P.H.J."/>
        </authorList>
    </citation>
    <scope>GENE FAMILY</scope>
    <scope>NOMENCLATURE</scope>
    <scope>DISRUPTION PHENOTYPE</scope>
</reference>